<name>PDXH_LEGPL</name>
<evidence type="ECO:0000255" key="1">
    <source>
        <dbReference type="HAMAP-Rule" id="MF_01629"/>
    </source>
</evidence>
<accession>Q5WZ02</accession>
<protein>
    <recommendedName>
        <fullName evidence="1">Pyridoxine/pyridoxamine 5'-phosphate oxidase</fullName>
        <ecNumber evidence="1">1.4.3.5</ecNumber>
    </recommendedName>
    <alternativeName>
        <fullName evidence="1">PNP/PMP oxidase</fullName>
        <shortName evidence="1">PNPOx</shortName>
    </alternativeName>
    <alternativeName>
        <fullName evidence="1">Pyridoxal 5'-phosphate synthase</fullName>
    </alternativeName>
</protein>
<dbReference type="EC" id="1.4.3.5" evidence="1"/>
<dbReference type="EMBL" id="CR628337">
    <property type="protein sequence ID" value="CAH14813.1"/>
    <property type="molecule type" value="Genomic_DNA"/>
</dbReference>
<dbReference type="RefSeq" id="WP_011214777.1">
    <property type="nucleotide sequence ID" value="NC_006369.1"/>
</dbReference>
<dbReference type="SMR" id="Q5WZ02"/>
<dbReference type="KEGG" id="lpf:lpl0582"/>
<dbReference type="LegioList" id="lpl0582"/>
<dbReference type="HOGENOM" id="CLU_032263_2_2_6"/>
<dbReference type="UniPathway" id="UPA01068">
    <property type="reaction ID" value="UER00304"/>
</dbReference>
<dbReference type="UniPathway" id="UPA01068">
    <property type="reaction ID" value="UER00305"/>
</dbReference>
<dbReference type="Proteomes" id="UP000002517">
    <property type="component" value="Chromosome"/>
</dbReference>
<dbReference type="GO" id="GO:0010181">
    <property type="term" value="F:FMN binding"/>
    <property type="evidence" value="ECO:0007669"/>
    <property type="project" value="UniProtKB-UniRule"/>
</dbReference>
<dbReference type="GO" id="GO:0004733">
    <property type="term" value="F:pyridoxamine phosphate oxidase activity"/>
    <property type="evidence" value="ECO:0007669"/>
    <property type="project" value="UniProtKB-UniRule"/>
</dbReference>
<dbReference type="GO" id="GO:0008615">
    <property type="term" value="P:pyridoxine biosynthetic process"/>
    <property type="evidence" value="ECO:0007669"/>
    <property type="project" value="UniProtKB-KW"/>
</dbReference>
<dbReference type="Gene3D" id="2.30.110.10">
    <property type="entry name" value="Electron Transport, Fmn-binding Protein, Chain A"/>
    <property type="match status" value="1"/>
</dbReference>
<dbReference type="HAMAP" id="MF_01629">
    <property type="entry name" value="PdxH"/>
    <property type="match status" value="1"/>
</dbReference>
<dbReference type="InterPro" id="IPR000659">
    <property type="entry name" value="Pyridox_Oxase"/>
</dbReference>
<dbReference type="InterPro" id="IPR019740">
    <property type="entry name" value="Pyridox_Oxase_CS"/>
</dbReference>
<dbReference type="InterPro" id="IPR011576">
    <property type="entry name" value="Pyridox_Oxase_N"/>
</dbReference>
<dbReference type="InterPro" id="IPR019576">
    <property type="entry name" value="Pyridoxamine_oxidase_dimer_C"/>
</dbReference>
<dbReference type="InterPro" id="IPR012349">
    <property type="entry name" value="Split_barrel_FMN-bd"/>
</dbReference>
<dbReference type="NCBIfam" id="TIGR00558">
    <property type="entry name" value="pdxH"/>
    <property type="match status" value="1"/>
</dbReference>
<dbReference type="NCBIfam" id="NF004231">
    <property type="entry name" value="PRK05679.1"/>
    <property type="match status" value="1"/>
</dbReference>
<dbReference type="PANTHER" id="PTHR10851:SF0">
    <property type="entry name" value="PYRIDOXINE-5'-PHOSPHATE OXIDASE"/>
    <property type="match status" value="1"/>
</dbReference>
<dbReference type="PANTHER" id="PTHR10851">
    <property type="entry name" value="PYRIDOXINE-5-PHOSPHATE OXIDASE"/>
    <property type="match status" value="1"/>
</dbReference>
<dbReference type="Pfam" id="PF10590">
    <property type="entry name" value="PNP_phzG_C"/>
    <property type="match status" value="1"/>
</dbReference>
<dbReference type="Pfam" id="PF01243">
    <property type="entry name" value="PNPOx_N"/>
    <property type="match status" value="1"/>
</dbReference>
<dbReference type="PIRSF" id="PIRSF000190">
    <property type="entry name" value="Pyd_amn-ph_oxd"/>
    <property type="match status" value="1"/>
</dbReference>
<dbReference type="SUPFAM" id="SSF50475">
    <property type="entry name" value="FMN-binding split barrel"/>
    <property type="match status" value="1"/>
</dbReference>
<dbReference type="PROSITE" id="PS01064">
    <property type="entry name" value="PYRIDOX_OXIDASE"/>
    <property type="match status" value="1"/>
</dbReference>
<proteinExistence type="inferred from homology"/>
<feature type="chain" id="PRO_0000167714" description="Pyridoxine/pyridoxamine 5'-phosphate oxidase">
    <location>
        <begin position="1"/>
        <end position="215"/>
    </location>
</feature>
<feature type="binding site" evidence="1">
    <location>
        <begin position="11"/>
        <end position="14"/>
    </location>
    <ligand>
        <name>substrate</name>
    </ligand>
</feature>
<feature type="binding site" evidence="1">
    <location>
        <begin position="64"/>
        <end position="69"/>
    </location>
    <ligand>
        <name>FMN</name>
        <dbReference type="ChEBI" id="CHEBI:58210"/>
    </ligand>
</feature>
<feature type="binding site" evidence="1">
    <location>
        <position position="69"/>
    </location>
    <ligand>
        <name>substrate</name>
    </ligand>
</feature>
<feature type="binding site" evidence="1">
    <location>
        <begin position="79"/>
        <end position="80"/>
    </location>
    <ligand>
        <name>FMN</name>
        <dbReference type="ChEBI" id="CHEBI:58210"/>
    </ligand>
</feature>
<feature type="binding site" evidence="1">
    <location>
        <position position="86"/>
    </location>
    <ligand>
        <name>FMN</name>
        <dbReference type="ChEBI" id="CHEBI:58210"/>
    </ligand>
</feature>
<feature type="binding site" evidence="1">
    <location>
        <position position="108"/>
    </location>
    <ligand>
        <name>FMN</name>
        <dbReference type="ChEBI" id="CHEBI:58210"/>
    </ligand>
</feature>
<feature type="binding site" evidence="1">
    <location>
        <position position="126"/>
    </location>
    <ligand>
        <name>substrate</name>
    </ligand>
</feature>
<feature type="binding site" evidence="1">
    <location>
        <position position="130"/>
    </location>
    <ligand>
        <name>substrate</name>
    </ligand>
</feature>
<feature type="binding site" evidence="1">
    <location>
        <position position="134"/>
    </location>
    <ligand>
        <name>substrate</name>
    </ligand>
</feature>
<feature type="binding site" evidence="1">
    <location>
        <begin position="143"/>
        <end position="144"/>
    </location>
    <ligand>
        <name>FMN</name>
        <dbReference type="ChEBI" id="CHEBI:58210"/>
    </ligand>
</feature>
<feature type="binding site" evidence="1">
    <location>
        <position position="188"/>
    </location>
    <ligand>
        <name>FMN</name>
        <dbReference type="ChEBI" id="CHEBI:58210"/>
    </ligand>
</feature>
<feature type="binding site" evidence="1">
    <location>
        <begin position="194"/>
        <end position="196"/>
    </location>
    <ligand>
        <name>substrate</name>
    </ligand>
</feature>
<feature type="binding site" evidence="1">
    <location>
        <position position="198"/>
    </location>
    <ligand>
        <name>FMN</name>
        <dbReference type="ChEBI" id="CHEBI:58210"/>
    </ligand>
</feature>
<keyword id="KW-0285">Flavoprotein</keyword>
<keyword id="KW-0288">FMN</keyword>
<keyword id="KW-0560">Oxidoreductase</keyword>
<keyword id="KW-0664">Pyridoxine biosynthesis</keyword>
<sequence length="215" mass="25263">MSKFRSLADIRRDYGELQLSEESAENDPISQFKLWFDDVLLNEKNDPTAMVLSTVDEKGYPDSRVVLLKGLENGNFIFYTNYQSAKAMQIQKNPYAALNFYWPQMARQVRVRGRVKKISSEQSDAYFSSRPIKSQFSAIVSPQSQEILDRISLEDALNQLIEEYGQKPVVRPENWGGYMIIPDEIEFWQGRDNRLHDRIHYYRHGHEWTHRRLAP</sequence>
<organism>
    <name type="scientific">Legionella pneumophila (strain Lens)</name>
    <dbReference type="NCBI Taxonomy" id="297245"/>
    <lineage>
        <taxon>Bacteria</taxon>
        <taxon>Pseudomonadati</taxon>
        <taxon>Pseudomonadota</taxon>
        <taxon>Gammaproteobacteria</taxon>
        <taxon>Legionellales</taxon>
        <taxon>Legionellaceae</taxon>
        <taxon>Legionella</taxon>
    </lineage>
</organism>
<gene>
    <name evidence="1" type="primary">pdxH</name>
    <name type="ordered locus">lpl0582</name>
</gene>
<reference key="1">
    <citation type="journal article" date="2004" name="Nat. Genet.">
        <title>Evidence in the Legionella pneumophila genome for exploitation of host cell functions and high genome plasticity.</title>
        <authorList>
            <person name="Cazalet C."/>
            <person name="Rusniok C."/>
            <person name="Brueggemann H."/>
            <person name="Zidane N."/>
            <person name="Magnier A."/>
            <person name="Ma L."/>
            <person name="Tichit M."/>
            <person name="Jarraud S."/>
            <person name="Bouchier C."/>
            <person name="Vandenesch F."/>
            <person name="Kunst F."/>
            <person name="Etienne J."/>
            <person name="Glaser P."/>
            <person name="Buchrieser C."/>
        </authorList>
    </citation>
    <scope>NUCLEOTIDE SEQUENCE [LARGE SCALE GENOMIC DNA]</scope>
    <source>
        <strain>Lens</strain>
    </source>
</reference>
<comment type="function">
    <text evidence="1">Catalyzes the oxidation of either pyridoxine 5'-phosphate (PNP) or pyridoxamine 5'-phosphate (PMP) into pyridoxal 5'-phosphate (PLP).</text>
</comment>
<comment type="catalytic activity">
    <reaction evidence="1">
        <text>pyridoxamine 5'-phosphate + O2 + H2O = pyridoxal 5'-phosphate + H2O2 + NH4(+)</text>
        <dbReference type="Rhea" id="RHEA:15817"/>
        <dbReference type="ChEBI" id="CHEBI:15377"/>
        <dbReference type="ChEBI" id="CHEBI:15379"/>
        <dbReference type="ChEBI" id="CHEBI:16240"/>
        <dbReference type="ChEBI" id="CHEBI:28938"/>
        <dbReference type="ChEBI" id="CHEBI:58451"/>
        <dbReference type="ChEBI" id="CHEBI:597326"/>
        <dbReference type="EC" id="1.4.3.5"/>
    </reaction>
</comment>
<comment type="catalytic activity">
    <reaction evidence="1">
        <text>pyridoxine 5'-phosphate + O2 = pyridoxal 5'-phosphate + H2O2</text>
        <dbReference type="Rhea" id="RHEA:15149"/>
        <dbReference type="ChEBI" id="CHEBI:15379"/>
        <dbReference type="ChEBI" id="CHEBI:16240"/>
        <dbReference type="ChEBI" id="CHEBI:58589"/>
        <dbReference type="ChEBI" id="CHEBI:597326"/>
        <dbReference type="EC" id="1.4.3.5"/>
    </reaction>
</comment>
<comment type="cofactor">
    <cofactor evidence="1">
        <name>FMN</name>
        <dbReference type="ChEBI" id="CHEBI:58210"/>
    </cofactor>
    <text evidence="1">Binds 1 FMN per subunit.</text>
</comment>
<comment type="pathway">
    <text evidence="1">Cofactor metabolism; pyridoxal 5'-phosphate salvage; pyridoxal 5'-phosphate from pyridoxamine 5'-phosphate: step 1/1.</text>
</comment>
<comment type="pathway">
    <text evidence="1">Cofactor metabolism; pyridoxal 5'-phosphate salvage; pyridoxal 5'-phosphate from pyridoxine 5'-phosphate: step 1/1.</text>
</comment>
<comment type="subunit">
    <text evidence="1">Homodimer.</text>
</comment>
<comment type="similarity">
    <text evidence="1">Belongs to the pyridoxamine 5'-phosphate oxidase family.</text>
</comment>